<organism>
    <name type="scientific">Bos taurus</name>
    <name type="common">Bovine</name>
    <dbReference type="NCBI Taxonomy" id="9913"/>
    <lineage>
        <taxon>Eukaryota</taxon>
        <taxon>Metazoa</taxon>
        <taxon>Chordata</taxon>
        <taxon>Craniata</taxon>
        <taxon>Vertebrata</taxon>
        <taxon>Euteleostomi</taxon>
        <taxon>Mammalia</taxon>
        <taxon>Eutheria</taxon>
        <taxon>Laurasiatheria</taxon>
        <taxon>Artiodactyla</taxon>
        <taxon>Ruminantia</taxon>
        <taxon>Pecora</taxon>
        <taxon>Bovidae</taxon>
        <taxon>Bovinae</taxon>
        <taxon>Bos</taxon>
    </lineage>
</organism>
<evidence type="ECO:0000250" key="1">
    <source>
        <dbReference type="UniProtKB" id="Q5W0V3"/>
    </source>
</evidence>
<evidence type="ECO:0000256" key="2">
    <source>
        <dbReference type="SAM" id="MobiDB-lite"/>
    </source>
</evidence>
<evidence type="ECO:0000305" key="3"/>
<feature type="chain" id="PRO_0000284647" description="FHF complex subunit HOOK interacting protein 2A">
    <location>
        <begin position="1"/>
        <end position="765"/>
    </location>
</feature>
<feature type="region of interest" description="Disordered" evidence="2">
    <location>
        <begin position="200"/>
        <end position="234"/>
    </location>
</feature>
<feature type="region of interest" description="Disordered" evidence="2">
    <location>
        <begin position="538"/>
        <end position="562"/>
    </location>
</feature>
<feature type="compositionally biased region" description="Polar residues" evidence="2">
    <location>
        <begin position="200"/>
        <end position="209"/>
    </location>
</feature>
<feature type="compositionally biased region" description="Polar residues" evidence="2">
    <location>
        <begin position="538"/>
        <end position="550"/>
    </location>
</feature>
<proteinExistence type="evidence at transcript level"/>
<name>FHI2A_BOVIN</name>
<keyword id="KW-1185">Reference proteome</keyword>
<comment type="function">
    <text evidence="1">May be required for proper functioning of the nervous system.</text>
</comment>
<comment type="similarity">
    <text evidence="3">Belongs to the FHIP family.</text>
</comment>
<accession>A0JNG7</accession>
<sequence length="765" mass="86297">MFSKFTSILQHAVEALAPSLPLQEDFVYHWKAITHYYIETSDDKAPVTDTNIPSHLEQMLVILVQEENEREFGETGPCMEYLLHHKILETLYTLGKADCPPGMKQQVLVFYTKLLGKIRQPLLPHINVHRPVQKLIRLCGEVLATPTENEEIQFLCIVCAKLKQDPYLVNFFLENKFKSLVSQGGPNAISEDVLKSQDSLSTDTGQSCQAEEPLGASGTEHTDLGDQPSHQMGDLSTSLENLSVTALPEATVVRPNQDYNLVNSLLNLTRSPDGRIAVKACEGLMLLVSLPEPAAAKCLTQSTCLCELLTDRLASLYKALPQSVDPLDIETVEAVNWGLDSYSHKEDASAFPGKRALISFLSWFDYCDQLIKEAQKTAAVALAKAVHERFFIGVMEPQLMQTSEMGILTSTALLHRIVRQVTSDILLQEMVFFILGEQREPETLAEISRHPLRHRLIEHCDHISDEISIMTLRMFEHLLQKPNEHILYNLVLRNLEERNYTEYKPVCPEDKDVVENGLIAGAVDLEEDPLFTDISPDNTLSNQEWLSSSPPATPDHPKTDGKTEVHKIVNSFLCLVPDEAKSSYHVEGTGYDTYLRDAHRQFRDYCAICLRWEWPGSPKALERCNLEAAFFEGHFLKVLFDRMGRILDQPYDVNLQVTSVLSRLSLFPHPHIHEYLLDPYVNLASGCRSLFSVIVRVVGDLMVRIQRIQDFTPKLLLVRKRLLGLEPEGPVIDHITLLEGVIVLEEFCKELAAIAFVKYHAASTP</sequence>
<reference key="1">
    <citation type="submission" date="2006-10" db="EMBL/GenBank/DDBJ databases">
        <authorList>
            <consortium name="NIH - Mammalian Gene Collection (MGC) project"/>
        </authorList>
    </citation>
    <scope>NUCLEOTIDE SEQUENCE [LARGE SCALE MRNA]</scope>
    <source>
        <strain>Hereford</strain>
        <tissue>Hypothalamus</tissue>
    </source>
</reference>
<dbReference type="EMBL" id="BC126677">
    <property type="protein sequence ID" value="AAI26678.1"/>
    <property type="molecule type" value="mRNA"/>
</dbReference>
<dbReference type="RefSeq" id="NP_001071416.1">
    <property type="nucleotide sequence ID" value="NM_001077948.1"/>
</dbReference>
<dbReference type="SMR" id="A0JNG7"/>
<dbReference type="FunCoup" id="A0JNG7">
    <property type="interactions" value="2616"/>
</dbReference>
<dbReference type="STRING" id="9913.ENSBTAP00000060392"/>
<dbReference type="PaxDb" id="9913-ENSBTAP00000003978"/>
<dbReference type="GeneID" id="522276"/>
<dbReference type="KEGG" id="bta:522276"/>
<dbReference type="CTD" id="57700"/>
<dbReference type="eggNOG" id="KOG3695">
    <property type="taxonomic scope" value="Eukaryota"/>
</dbReference>
<dbReference type="HOGENOM" id="CLU_023718_0_0_1"/>
<dbReference type="InParanoid" id="A0JNG7"/>
<dbReference type="OrthoDB" id="5350595at2759"/>
<dbReference type="Proteomes" id="UP000009136">
    <property type="component" value="Unplaced"/>
</dbReference>
<dbReference type="InterPro" id="IPR019384">
    <property type="entry name" value="FHIP"/>
</dbReference>
<dbReference type="InterPro" id="IPR045669">
    <property type="entry name" value="FHIP_C"/>
</dbReference>
<dbReference type="InterPro" id="IPR045668">
    <property type="entry name" value="FHIP_KELAA_motif"/>
</dbReference>
<dbReference type="PANTHER" id="PTHR21705:SF10">
    <property type="entry name" value="FHF COMPLEX SUBUNIT HOOK INTERACTING PROTEIN 2A"/>
    <property type="match status" value="1"/>
</dbReference>
<dbReference type="PANTHER" id="PTHR21705">
    <property type="entry name" value="RAI16 PROTEIN-RELATED"/>
    <property type="match status" value="1"/>
</dbReference>
<dbReference type="Pfam" id="PF19314">
    <property type="entry name" value="DUF5917"/>
    <property type="match status" value="1"/>
</dbReference>
<dbReference type="Pfam" id="PF19311">
    <property type="entry name" value="KELAA"/>
    <property type="match status" value="1"/>
</dbReference>
<dbReference type="Pfam" id="PF10257">
    <property type="entry name" value="RAI16-like"/>
    <property type="match status" value="1"/>
</dbReference>
<protein>
    <recommendedName>
        <fullName>FHF complex subunit HOOK interacting protein 2A</fullName>
        <shortName>FHIP2A</shortName>
    </recommendedName>
</protein>
<gene>
    <name type="primary">FHIP2A</name>
    <name type="synonym">FAM160B1</name>
</gene>